<accession>A8AC96</accession>
<dbReference type="EMBL" id="CP000816">
    <property type="protein sequence ID" value="ABU82548.1"/>
    <property type="molecule type" value="Genomic_DNA"/>
</dbReference>
<dbReference type="RefSeq" id="WP_012123512.1">
    <property type="nucleotide sequence ID" value="NC_009776.1"/>
</dbReference>
<dbReference type="SMR" id="A8AC96"/>
<dbReference type="STRING" id="453591.Igni_1372"/>
<dbReference type="GeneID" id="5562291"/>
<dbReference type="KEGG" id="iho:Igni_1372"/>
<dbReference type="eggNOG" id="arCOG01981">
    <property type="taxonomic scope" value="Archaea"/>
</dbReference>
<dbReference type="HOGENOM" id="CLU_043736_0_1_2"/>
<dbReference type="OrthoDB" id="7429at2157"/>
<dbReference type="PhylomeDB" id="A8AC96"/>
<dbReference type="Proteomes" id="UP000000262">
    <property type="component" value="Chromosome"/>
</dbReference>
<dbReference type="GO" id="GO:0097550">
    <property type="term" value="C:transcription preinitiation complex"/>
    <property type="evidence" value="ECO:0007669"/>
    <property type="project" value="TreeGrafter"/>
</dbReference>
<dbReference type="GO" id="GO:0003700">
    <property type="term" value="F:DNA-binding transcription factor activity"/>
    <property type="evidence" value="ECO:0007669"/>
    <property type="project" value="UniProtKB-UniRule"/>
</dbReference>
<dbReference type="GO" id="GO:0017025">
    <property type="term" value="F:TBP-class protein binding"/>
    <property type="evidence" value="ECO:0007669"/>
    <property type="project" value="InterPro"/>
</dbReference>
<dbReference type="GO" id="GO:0008270">
    <property type="term" value="F:zinc ion binding"/>
    <property type="evidence" value="ECO:0007669"/>
    <property type="project" value="UniProtKB-UniRule"/>
</dbReference>
<dbReference type="GO" id="GO:0070897">
    <property type="term" value="P:transcription preinitiation complex assembly"/>
    <property type="evidence" value="ECO:0007669"/>
    <property type="project" value="InterPro"/>
</dbReference>
<dbReference type="CDD" id="cd20549">
    <property type="entry name" value="CYCLIN_TFIIB_archaea_like_rpt1"/>
    <property type="match status" value="1"/>
</dbReference>
<dbReference type="CDD" id="cd20550">
    <property type="entry name" value="CYCLIN_TFIIB_archaea_like_rpt2"/>
    <property type="match status" value="1"/>
</dbReference>
<dbReference type="FunFam" id="1.10.472.170:FF:000001">
    <property type="entry name" value="Transcription initiation factor IIB"/>
    <property type="match status" value="1"/>
</dbReference>
<dbReference type="Gene3D" id="1.10.472.170">
    <property type="match status" value="1"/>
</dbReference>
<dbReference type="Gene3D" id="1.10.472.10">
    <property type="entry name" value="Cyclin-like"/>
    <property type="match status" value="1"/>
</dbReference>
<dbReference type="HAMAP" id="MF_00383">
    <property type="entry name" value="TF2B_arch"/>
    <property type="match status" value="1"/>
</dbReference>
<dbReference type="InterPro" id="IPR013763">
    <property type="entry name" value="Cyclin-like_dom"/>
</dbReference>
<dbReference type="InterPro" id="IPR036915">
    <property type="entry name" value="Cyclin-like_sf"/>
</dbReference>
<dbReference type="InterPro" id="IPR000812">
    <property type="entry name" value="TFIIB"/>
</dbReference>
<dbReference type="InterPro" id="IPR023484">
    <property type="entry name" value="TFIIB_arc"/>
</dbReference>
<dbReference type="InterPro" id="IPR023486">
    <property type="entry name" value="TFIIB_CS"/>
</dbReference>
<dbReference type="InterPro" id="IPR013150">
    <property type="entry name" value="TFIIB_cyclin"/>
</dbReference>
<dbReference type="InterPro" id="IPR013137">
    <property type="entry name" value="Znf_TFIIB"/>
</dbReference>
<dbReference type="NCBIfam" id="NF001658">
    <property type="entry name" value="PRK00423.1"/>
    <property type="match status" value="1"/>
</dbReference>
<dbReference type="PANTHER" id="PTHR11618:SF13">
    <property type="entry name" value="TRANSCRIPTION INITIATION FACTOR IIB"/>
    <property type="match status" value="1"/>
</dbReference>
<dbReference type="PANTHER" id="PTHR11618">
    <property type="entry name" value="TRANSCRIPTION INITIATION FACTOR IIB-RELATED"/>
    <property type="match status" value="1"/>
</dbReference>
<dbReference type="Pfam" id="PF00382">
    <property type="entry name" value="TFIIB"/>
    <property type="match status" value="2"/>
</dbReference>
<dbReference type="Pfam" id="PF08271">
    <property type="entry name" value="Zn_Ribbon_TF"/>
    <property type="match status" value="1"/>
</dbReference>
<dbReference type="PRINTS" id="PR00685">
    <property type="entry name" value="TIFACTORIIB"/>
</dbReference>
<dbReference type="SMART" id="SM00385">
    <property type="entry name" value="CYCLIN"/>
    <property type="match status" value="2"/>
</dbReference>
<dbReference type="SUPFAM" id="SSF47954">
    <property type="entry name" value="Cyclin-like"/>
    <property type="match status" value="2"/>
</dbReference>
<dbReference type="SUPFAM" id="SSF57783">
    <property type="entry name" value="Zinc beta-ribbon"/>
    <property type="match status" value="1"/>
</dbReference>
<dbReference type="PROSITE" id="PS00782">
    <property type="entry name" value="TFIIB"/>
    <property type="match status" value="1"/>
</dbReference>
<dbReference type="PROSITE" id="PS51134">
    <property type="entry name" value="ZF_TFIIB"/>
    <property type="match status" value="1"/>
</dbReference>
<feature type="chain" id="PRO_1000080105" description="Transcription initiation factor IIB">
    <location>
        <begin position="1"/>
        <end position="316"/>
    </location>
</feature>
<feature type="repeat" description="1">
    <location>
        <begin position="124"/>
        <end position="207"/>
    </location>
</feature>
<feature type="repeat" description="2">
    <location>
        <begin position="218"/>
        <end position="299"/>
    </location>
</feature>
<feature type="zinc finger region" description="TFIIB-type" evidence="2">
    <location>
        <begin position="7"/>
        <end position="38"/>
    </location>
</feature>
<feature type="region of interest" description="Disordered" evidence="3">
    <location>
        <begin position="51"/>
        <end position="73"/>
    </location>
</feature>
<feature type="binding site" evidence="2">
    <location>
        <position position="11"/>
    </location>
    <ligand>
        <name>Zn(2+)</name>
        <dbReference type="ChEBI" id="CHEBI:29105"/>
    </ligand>
</feature>
<feature type="binding site" evidence="2">
    <location>
        <position position="14"/>
    </location>
    <ligand>
        <name>Zn(2+)</name>
        <dbReference type="ChEBI" id="CHEBI:29105"/>
    </ligand>
</feature>
<feature type="binding site" evidence="2">
    <location>
        <position position="30"/>
    </location>
    <ligand>
        <name>Zn(2+)</name>
        <dbReference type="ChEBI" id="CHEBI:29105"/>
    </ligand>
</feature>
<feature type="binding site" evidence="2">
    <location>
        <position position="33"/>
    </location>
    <ligand>
        <name>Zn(2+)</name>
        <dbReference type="ChEBI" id="CHEBI:29105"/>
    </ligand>
</feature>
<protein>
    <recommendedName>
        <fullName evidence="1">Transcription initiation factor IIB</fullName>
        <shortName evidence="1">TFIIB</shortName>
    </recommendedName>
</protein>
<keyword id="KW-0479">Metal-binding</keyword>
<keyword id="KW-1185">Reference proteome</keyword>
<keyword id="KW-0677">Repeat</keyword>
<keyword id="KW-0804">Transcription</keyword>
<keyword id="KW-0805">Transcription regulation</keyword>
<keyword id="KW-0862">Zinc</keyword>
<keyword id="KW-0863">Zinc-finger</keyword>
<reference key="1">
    <citation type="journal article" date="2008" name="Genome Biol.">
        <title>A genomic analysis of the archaeal system Ignicoccus hospitalis-Nanoarchaeum equitans.</title>
        <authorList>
            <person name="Podar M."/>
            <person name="Anderson I."/>
            <person name="Makarova K.S."/>
            <person name="Elkins J.G."/>
            <person name="Ivanova N."/>
            <person name="Wall M.A."/>
            <person name="Lykidis A."/>
            <person name="Mavromatis K."/>
            <person name="Sun H."/>
            <person name="Hudson M.E."/>
            <person name="Chen W."/>
            <person name="Deciu C."/>
            <person name="Hutchison D."/>
            <person name="Eads J.R."/>
            <person name="Anderson A."/>
            <person name="Fernandes F."/>
            <person name="Szeto E."/>
            <person name="Lapidus A."/>
            <person name="Kyrpides N.C."/>
            <person name="Saier M.H. Jr."/>
            <person name="Richardson P.M."/>
            <person name="Rachel R."/>
            <person name="Huber H."/>
            <person name="Eisen J.A."/>
            <person name="Koonin E.V."/>
            <person name="Keller M."/>
            <person name="Stetter K.O."/>
        </authorList>
    </citation>
    <scope>NUCLEOTIDE SEQUENCE [LARGE SCALE GENOMIC DNA]</scope>
    <source>
        <strain>KIN4/I / DSM 18386 / JCM 14125</strain>
    </source>
</reference>
<proteinExistence type="inferred from homology"/>
<sequence>MPEQEAFRLRCPVCGSTDIVFNEETGEYVCARCGTIVLDRYVDQGPEWRAFTPEERERRGRTGAPLSPTLHDHGLSTVIDHRDRDALGKRLSPRKRQEVQRLRKWQLRARIQTGMDRNLTIAMNELDRMANLLNLPKQIKEEAAVIYRKAVEKGLVRGRSIESVVAAVIYAACRIHHQPRTLDEIAKKLEVNRKEVARCYRLITKELKLKVPIADAMDHIPRIGEALKLRGDIIEYAMKIMEKIKGHPITAGKDPAGIAAAVIYIAVMQKGERRTQKEIANVAGVTEVTVRNRYKEIMKVLNEMDLEEIEKEVSKK</sequence>
<evidence type="ECO:0000255" key="1">
    <source>
        <dbReference type="HAMAP-Rule" id="MF_00383"/>
    </source>
</evidence>
<evidence type="ECO:0000255" key="2">
    <source>
        <dbReference type="PROSITE-ProRule" id="PRU00469"/>
    </source>
</evidence>
<evidence type="ECO:0000256" key="3">
    <source>
        <dbReference type="SAM" id="MobiDB-lite"/>
    </source>
</evidence>
<comment type="function">
    <text evidence="1">Stabilizes TBP binding to an archaeal box-A promoter. Also responsible for recruiting RNA polymerase II to the pre-initiation complex (DNA-TBP-TFIIB).</text>
</comment>
<comment type="similarity">
    <text evidence="1">Belongs to the TFIIB family.</text>
</comment>
<organism>
    <name type="scientific">Ignicoccus hospitalis (strain KIN4/I / DSM 18386 / JCM 14125)</name>
    <dbReference type="NCBI Taxonomy" id="453591"/>
    <lineage>
        <taxon>Archaea</taxon>
        <taxon>Thermoproteota</taxon>
        <taxon>Thermoprotei</taxon>
        <taxon>Desulfurococcales</taxon>
        <taxon>Desulfurococcaceae</taxon>
        <taxon>Ignicoccus</taxon>
    </lineage>
</organism>
<gene>
    <name evidence="1" type="primary">tfb</name>
    <name type="ordered locus">Igni_1372</name>
</gene>
<name>TF2B_IGNH4</name>